<gene>
    <name evidence="5" type="primary">kcmf-1</name>
    <name evidence="5" type="ORF">ZK652.6</name>
</gene>
<organism>
    <name type="scientific">Caenorhabditis elegans</name>
    <dbReference type="NCBI Taxonomy" id="6239"/>
    <lineage>
        <taxon>Eukaryota</taxon>
        <taxon>Metazoa</taxon>
        <taxon>Ecdysozoa</taxon>
        <taxon>Nematoda</taxon>
        <taxon>Chromadorea</taxon>
        <taxon>Rhabditida</taxon>
        <taxon>Rhabditina</taxon>
        <taxon>Rhabditomorpha</taxon>
        <taxon>Rhabditoidea</taxon>
        <taxon>Rhabditidae</taxon>
        <taxon>Peloderinae</taxon>
        <taxon>Caenorhabditis</taxon>
    </lineage>
</organism>
<dbReference type="EC" id="2.3.2.27" evidence="1"/>
<dbReference type="EMBL" id="FO080278">
    <property type="protein sequence ID" value="CCD62551.1"/>
    <property type="molecule type" value="Genomic_DNA"/>
</dbReference>
<dbReference type="EMBL" id="FO080278">
    <property type="protein sequence ID" value="CCD62552.1"/>
    <property type="molecule type" value="Genomic_DNA"/>
</dbReference>
<dbReference type="SMR" id="P34664"/>
<dbReference type="BioGRID" id="41303">
    <property type="interactions" value="4"/>
</dbReference>
<dbReference type="FunCoup" id="P34664">
    <property type="interactions" value="209"/>
</dbReference>
<dbReference type="IntAct" id="P34664">
    <property type="interactions" value="2"/>
</dbReference>
<dbReference type="STRING" id="6239.ZK652.6a.1"/>
<dbReference type="iPTMnet" id="P34664"/>
<dbReference type="PaxDb" id="6239-ZK652.6a"/>
<dbReference type="PeptideAtlas" id="P34664"/>
<dbReference type="EnsemblMetazoa" id="ZK652.6a.1">
    <property type="protein sequence ID" value="ZK652.6a.1"/>
    <property type="gene ID" value="WBGene00022785"/>
</dbReference>
<dbReference type="KEGG" id="cel:CELE_ZK652.6"/>
<dbReference type="UCSC" id="ZK652.6a.1">
    <molecule id="P34664-1"/>
    <property type="organism name" value="c. elegans"/>
</dbReference>
<dbReference type="AGR" id="WB:WBGene00022785"/>
<dbReference type="CTD" id="176095"/>
<dbReference type="WormBase" id="ZK652.6a">
    <property type="protein sequence ID" value="CE50501"/>
    <property type="gene ID" value="WBGene00022785"/>
    <property type="gene designation" value="kcmf-1"/>
</dbReference>
<dbReference type="eggNOG" id="KOG1280">
    <property type="taxonomic scope" value="Eukaryota"/>
</dbReference>
<dbReference type="GeneTree" id="ENSGT00510000047171"/>
<dbReference type="HOGENOM" id="CLU_458016_0_0_1"/>
<dbReference type="InParanoid" id="P34664"/>
<dbReference type="OrthoDB" id="7873042at2759"/>
<dbReference type="Reactome" id="R-CEL-6798695">
    <property type="pathway name" value="Neutrophil degranulation"/>
</dbReference>
<dbReference type="UniPathway" id="UPA00143"/>
<dbReference type="PRO" id="PR:P34664"/>
<dbReference type="Proteomes" id="UP000001940">
    <property type="component" value="Chromosome III"/>
</dbReference>
<dbReference type="Bgee" id="WBGene00022785">
    <property type="expression patterns" value="Expressed in germ line (C elegans) and 4 other cell types or tissues"/>
</dbReference>
<dbReference type="ExpressionAtlas" id="P34664">
    <property type="expression patterns" value="baseline and differential"/>
</dbReference>
<dbReference type="GO" id="GO:0005634">
    <property type="term" value="C:nucleus"/>
    <property type="evidence" value="ECO:0007669"/>
    <property type="project" value="UniProtKB-SubCell"/>
</dbReference>
<dbReference type="GO" id="GO:0005886">
    <property type="term" value="C:plasma membrane"/>
    <property type="evidence" value="ECO:0000318"/>
    <property type="project" value="GO_Central"/>
</dbReference>
<dbReference type="GO" id="GO:0045202">
    <property type="term" value="C:synapse"/>
    <property type="evidence" value="ECO:0007669"/>
    <property type="project" value="GOC"/>
</dbReference>
<dbReference type="GO" id="GO:0003677">
    <property type="term" value="F:DNA binding"/>
    <property type="evidence" value="ECO:0007669"/>
    <property type="project" value="UniProtKB-KW"/>
</dbReference>
<dbReference type="GO" id="GO:0008270">
    <property type="term" value="F:zinc ion binding"/>
    <property type="evidence" value="ECO:0007669"/>
    <property type="project" value="UniProtKB-KW"/>
</dbReference>
<dbReference type="GO" id="GO:0010646">
    <property type="term" value="P:regulation of cell communication"/>
    <property type="evidence" value="ECO:0007669"/>
    <property type="project" value="UniProtKB-ARBA"/>
</dbReference>
<dbReference type="GO" id="GO:0023051">
    <property type="term" value="P:regulation of signaling"/>
    <property type="evidence" value="ECO:0007669"/>
    <property type="project" value="UniProtKB-ARBA"/>
</dbReference>
<dbReference type="GO" id="GO:0099536">
    <property type="term" value="P:synaptic signaling"/>
    <property type="evidence" value="ECO:0000318"/>
    <property type="project" value="GO_Central"/>
</dbReference>
<dbReference type="CDD" id="cd02338">
    <property type="entry name" value="ZZ_PCMF_like"/>
    <property type="match status" value="1"/>
</dbReference>
<dbReference type="Gene3D" id="3.30.60.90">
    <property type="match status" value="1"/>
</dbReference>
<dbReference type="InterPro" id="IPR008598">
    <property type="entry name" value="Di19_Zn-bd"/>
</dbReference>
<dbReference type="InterPro" id="IPR050774">
    <property type="entry name" value="KCMF1/Dystrophin"/>
</dbReference>
<dbReference type="InterPro" id="IPR000433">
    <property type="entry name" value="Znf_ZZ"/>
</dbReference>
<dbReference type="InterPro" id="IPR043145">
    <property type="entry name" value="Znf_ZZ_sf"/>
</dbReference>
<dbReference type="PANTHER" id="PTHR12268">
    <property type="entry name" value="E3 UBIQUITIN-PROTEIN LIGASE KCMF1"/>
    <property type="match status" value="1"/>
</dbReference>
<dbReference type="PANTHER" id="PTHR12268:SF13">
    <property type="entry name" value="E3 UBIQUITIN-PROTEIN LIGASE KCMF1"/>
    <property type="match status" value="1"/>
</dbReference>
<dbReference type="Pfam" id="PF05605">
    <property type="entry name" value="zf-Di19"/>
    <property type="match status" value="1"/>
</dbReference>
<dbReference type="Pfam" id="PF00569">
    <property type="entry name" value="ZZ"/>
    <property type="match status" value="1"/>
</dbReference>
<dbReference type="SMART" id="SM00291">
    <property type="entry name" value="ZnF_ZZ"/>
    <property type="match status" value="1"/>
</dbReference>
<dbReference type="SUPFAM" id="SSF57850">
    <property type="entry name" value="RING/U-box"/>
    <property type="match status" value="1"/>
</dbReference>
<dbReference type="PROSITE" id="PS01357">
    <property type="entry name" value="ZF_ZZ_1"/>
    <property type="match status" value="1"/>
</dbReference>
<dbReference type="PROSITE" id="PS50135">
    <property type="entry name" value="ZF_ZZ_2"/>
    <property type="match status" value="1"/>
</dbReference>
<feature type="chain" id="PRO_0000065535" description="E3 ubiquitin-protein ligase kcmf-1">
    <location>
        <begin position="1"/>
        <end position="575"/>
    </location>
</feature>
<feature type="zinc finger region" description="ZZ-type" evidence="2">
    <location>
        <begin position="9"/>
        <end position="73"/>
    </location>
</feature>
<feature type="region of interest" description="Disordered" evidence="3">
    <location>
        <begin position="277"/>
        <end position="306"/>
    </location>
</feature>
<feature type="region of interest" description="Disordered" evidence="3">
    <location>
        <begin position="530"/>
        <end position="575"/>
    </location>
</feature>
<feature type="compositionally biased region" description="Acidic residues" evidence="3">
    <location>
        <begin position="297"/>
        <end position="306"/>
    </location>
</feature>
<feature type="compositionally biased region" description="Acidic residues" evidence="3">
    <location>
        <begin position="530"/>
        <end position="563"/>
    </location>
</feature>
<feature type="binding site" evidence="2">
    <location>
        <position position="14"/>
    </location>
    <ligand>
        <name>Zn(2+)</name>
        <dbReference type="ChEBI" id="CHEBI:29105"/>
        <label>1</label>
    </ligand>
</feature>
<feature type="binding site" evidence="2">
    <location>
        <position position="17"/>
    </location>
    <ligand>
        <name>Zn(2+)</name>
        <dbReference type="ChEBI" id="CHEBI:29105"/>
        <label>1</label>
    </ligand>
</feature>
<feature type="binding site" evidence="2">
    <location>
        <position position="29"/>
    </location>
    <ligand>
        <name>Zn(2+)</name>
        <dbReference type="ChEBI" id="CHEBI:29105"/>
        <label>2</label>
    </ligand>
</feature>
<feature type="binding site" evidence="2">
    <location>
        <position position="32"/>
    </location>
    <ligand>
        <name>Zn(2+)</name>
        <dbReference type="ChEBI" id="CHEBI:29105"/>
        <label>2</label>
    </ligand>
</feature>
<feature type="binding site" evidence="2">
    <location>
        <position position="38"/>
    </location>
    <ligand>
        <name>Zn(2+)</name>
        <dbReference type="ChEBI" id="CHEBI:29105"/>
        <label>1</label>
    </ligand>
</feature>
<feature type="binding site" evidence="2">
    <location>
        <position position="41"/>
    </location>
    <ligand>
        <name>Zn(2+)</name>
        <dbReference type="ChEBI" id="CHEBI:29105"/>
        <label>1</label>
    </ligand>
</feature>
<feature type="binding site" evidence="2">
    <location>
        <position position="59"/>
    </location>
    <ligand>
        <name>Zn(2+)</name>
        <dbReference type="ChEBI" id="CHEBI:29105"/>
        <label>2</label>
    </ligand>
</feature>
<feature type="binding site" evidence="2">
    <location>
        <position position="63"/>
    </location>
    <ligand>
        <name>Zn(2+)</name>
        <dbReference type="ChEBI" id="CHEBI:29105"/>
        <label>2</label>
    </ligand>
</feature>
<feature type="splice variant" id="VSP_017900" description="In isoform b." evidence="4">
    <location>
        <begin position="1"/>
        <end position="346"/>
    </location>
</feature>
<comment type="function">
    <text evidence="1">E3 ubiquitin-protein ligase which accepts ubiquitin from an E2 ubiquitin-conjugating enzyme and then transfers it to targeted substrates, promoting their degradation by the proteasome.</text>
</comment>
<comment type="catalytic activity">
    <reaction evidence="1">
        <text>S-ubiquitinyl-[E2 ubiquitin-conjugating enzyme]-L-cysteine + [acceptor protein]-L-lysine = [E2 ubiquitin-conjugating enzyme]-L-cysteine + N(6)-ubiquitinyl-[acceptor protein]-L-lysine.</text>
        <dbReference type="EC" id="2.3.2.27"/>
    </reaction>
</comment>
<comment type="pathway">
    <text evidence="1">Protein modification; protein ubiquitination.</text>
</comment>
<comment type="subcellular location">
    <subcellularLocation>
        <location evidence="1">Cytoplasm</location>
    </subcellularLocation>
    <subcellularLocation>
        <location evidence="1">Late endosome</location>
    </subcellularLocation>
    <subcellularLocation>
        <location evidence="1">Lysosome</location>
    </subcellularLocation>
</comment>
<comment type="alternative products">
    <event type="alternative splicing"/>
    <isoform>
        <id>P34664-1</id>
        <name>a</name>
        <sequence type="displayed"/>
    </isoform>
    <isoform>
        <id>P34664-2</id>
        <name>b</name>
        <sequence type="described" ref="VSP_017900"/>
    </isoform>
</comment>
<comment type="similarity">
    <text evidence="4">Belongs to the KCMF1 family.</text>
</comment>
<accession>P34664</accession>
<accession>Q7Z143</accession>
<reference key="1">
    <citation type="journal article" date="1994" name="Nature">
        <title>2.2 Mb of contiguous nucleotide sequence from chromosome III of C. elegans.</title>
        <authorList>
            <person name="Wilson R."/>
            <person name="Ainscough R."/>
            <person name="Anderson K."/>
            <person name="Baynes C."/>
            <person name="Berks M."/>
            <person name="Bonfield J."/>
            <person name="Burton J."/>
            <person name="Connell M."/>
            <person name="Copsey T."/>
            <person name="Cooper J."/>
            <person name="Coulson A."/>
            <person name="Craxton M."/>
            <person name="Dear S."/>
            <person name="Du Z."/>
            <person name="Durbin R."/>
            <person name="Favello A."/>
            <person name="Fraser A."/>
            <person name="Fulton L."/>
            <person name="Gardner A."/>
            <person name="Green P."/>
            <person name="Hawkins T."/>
            <person name="Hillier L."/>
            <person name="Jier M."/>
            <person name="Johnston L."/>
            <person name="Jones M."/>
            <person name="Kershaw J."/>
            <person name="Kirsten J."/>
            <person name="Laisster N."/>
            <person name="Latreille P."/>
            <person name="Lightning J."/>
            <person name="Lloyd C."/>
            <person name="Mortimore B."/>
            <person name="O'Callaghan M."/>
            <person name="Parsons J."/>
            <person name="Percy C."/>
            <person name="Rifken L."/>
            <person name="Roopra A."/>
            <person name="Saunders D."/>
            <person name="Shownkeen R."/>
            <person name="Sims M."/>
            <person name="Smaldon N."/>
            <person name="Smith A."/>
            <person name="Smith M."/>
            <person name="Sonnhammer E."/>
            <person name="Staden R."/>
            <person name="Sulston J."/>
            <person name="Thierry-Mieg J."/>
            <person name="Thomas K."/>
            <person name="Vaudin M."/>
            <person name="Vaughan K."/>
            <person name="Waterston R."/>
            <person name="Watson A."/>
            <person name="Weinstock L."/>
            <person name="Wilkinson-Sproat J."/>
            <person name="Wohldman P."/>
        </authorList>
    </citation>
    <scope>NUCLEOTIDE SEQUENCE [LARGE SCALE GENOMIC DNA]</scope>
    <source>
        <strain>Bristol N2</strain>
    </source>
</reference>
<reference key="2">
    <citation type="journal article" date="1998" name="Science">
        <title>Genome sequence of the nematode C. elegans: a platform for investigating biology.</title>
        <authorList>
            <consortium name="The C. elegans sequencing consortium"/>
        </authorList>
    </citation>
    <scope>NUCLEOTIDE SEQUENCE [LARGE SCALE GENOMIC DNA]</scope>
    <scope>ALTERNATIVE SPLICING</scope>
    <source>
        <strain>Bristol N2</strain>
    </source>
</reference>
<name>KCMF1_CAEEL</name>
<sequence>MVTPLTGTHEGVSCDGCAFTAFAGNRYKCLRCSDYDLCFSCFTTKNYGDQQTIADIPIHDESHPMQLILSSVDFDLVYQGDPTRHYDERKIVSFTCPYCNITGLTERQFGTHVLSQHPEAPGYSVICPLCIGNTEMEHIQSKETENLSVHWTEIHLHTMENLFRSTEPITTRPVQRRPMLARRGNRAGVSRTAAQGRPLQDEIGAEMAALLRNMGPDSVEDIRRFTEMMTVPLLPGIRSSQRLMTSTGDRPTVVVESAVTHQDPNVQQVIRPLATIPIYPPTSDESGDETPQPAADSADESEDDNDIQELDDMQPIVEDEALKKDEFWKTLKTRISEEDVDLILETMKSTAKVKEDIDDKMPVWTQRPLKRLANAAQVTTTSDSEGDPGWLPLSFETTPIRSTGCGGYWSDKRFLRPRKMQREQSVASSNAEIMEKAEIALALIRASCLHEPVFTDPTKPDIALKEALQHLRLGEKPAKMMEYQAAEELVNMPERDPITTGEMEVEIPDFTARGYGQIVDGNIPLGVVPEADEAITNSEDEEIVGGETSGDDEDEQEDDENDSQDSSVPEEINID</sequence>
<protein>
    <recommendedName>
        <fullName evidence="1">E3 ubiquitin-protein ligase kcmf-1</fullName>
        <shortName evidence="4">KCMF1 homolog</shortName>
        <ecNumber evidence="1">2.3.2.27</ecNumber>
    </recommendedName>
    <alternativeName>
        <fullName evidence="5">Potassium channel modulatory factor kcmf-1</fullName>
    </alternativeName>
</protein>
<keyword id="KW-0025">Alternative splicing</keyword>
<keyword id="KW-0963">Cytoplasm</keyword>
<keyword id="KW-0238">DNA-binding</keyword>
<keyword id="KW-0967">Endosome</keyword>
<keyword id="KW-0458">Lysosome</keyword>
<keyword id="KW-0479">Metal-binding</keyword>
<keyword id="KW-1185">Reference proteome</keyword>
<keyword id="KW-0808">Transferase</keyword>
<keyword id="KW-0862">Zinc</keyword>
<keyword id="KW-0863">Zinc-finger</keyword>
<proteinExistence type="inferred from homology"/>
<evidence type="ECO:0000250" key="1">
    <source>
        <dbReference type="UniProtKB" id="Q9P0J7"/>
    </source>
</evidence>
<evidence type="ECO:0000255" key="2">
    <source>
        <dbReference type="PROSITE-ProRule" id="PRU00228"/>
    </source>
</evidence>
<evidence type="ECO:0000256" key="3">
    <source>
        <dbReference type="SAM" id="MobiDB-lite"/>
    </source>
</evidence>
<evidence type="ECO:0000305" key="4"/>
<evidence type="ECO:0000312" key="5">
    <source>
        <dbReference type="WormBase" id="ZK652.6a"/>
    </source>
</evidence>